<gene>
    <name evidence="1" type="primary">nuoI</name>
    <name type="ordered locus">NE1769</name>
</gene>
<protein>
    <recommendedName>
        <fullName evidence="1">NADH-quinone oxidoreductase subunit I</fullName>
        <ecNumber evidence="1">7.1.1.-</ecNumber>
    </recommendedName>
    <alternativeName>
        <fullName evidence="1">NADH dehydrogenase I subunit I</fullName>
    </alternativeName>
    <alternativeName>
        <fullName evidence="1">NDH-1 subunit I</fullName>
    </alternativeName>
</protein>
<sequence length="162" mass="18829">MERIKQFFKSFLLVEMLKGMKVTGRYLFAPKITVHYPEEKTPQSPRFRGLHALRRYPNGEERCIACKLCEAVCPAMAITIESEQRDDSTRRTTRYDIDMIKCIFCGFCEEACPVDAIVETRVLEYHGEVRGDLTYTKEMLLAVGDRYEEQIARDRAADAPYR</sequence>
<accession>Q82TV1</accession>
<evidence type="ECO:0000255" key="1">
    <source>
        <dbReference type="HAMAP-Rule" id="MF_01351"/>
    </source>
</evidence>
<proteinExistence type="inferred from homology"/>
<keyword id="KW-0004">4Fe-4S</keyword>
<keyword id="KW-0997">Cell inner membrane</keyword>
<keyword id="KW-1003">Cell membrane</keyword>
<keyword id="KW-0408">Iron</keyword>
<keyword id="KW-0411">Iron-sulfur</keyword>
<keyword id="KW-0472">Membrane</keyword>
<keyword id="KW-0479">Metal-binding</keyword>
<keyword id="KW-0520">NAD</keyword>
<keyword id="KW-0874">Quinone</keyword>
<keyword id="KW-1185">Reference proteome</keyword>
<keyword id="KW-0677">Repeat</keyword>
<keyword id="KW-1278">Translocase</keyword>
<keyword id="KW-0830">Ubiquinone</keyword>
<dbReference type="EC" id="7.1.1.-" evidence="1"/>
<dbReference type="EMBL" id="AL954747">
    <property type="protein sequence ID" value="CAD85680.1"/>
    <property type="molecule type" value="Genomic_DNA"/>
</dbReference>
<dbReference type="RefSeq" id="WP_011112320.1">
    <property type="nucleotide sequence ID" value="NC_004757.1"/>
</dbReference>
<dbReference type="SMR" id="Q82TV1"/>
<dbReference type="STRING" id="228410.NE1769"/>
<dbReference type="GeneID" id="87104930"/>
<dbReference type="KEGG" id="neu:NE1769"/>
<dbReference type="eggNOG" id="COG1143">
    <property type="taxonomic scope" value="Bacteria"/>
</dbReference>
<dbReference type="HOGENOM" id="CLU_067218_5_1_4"/>
<dbReference type="OrthoDB" id="9808559at2"/>
<dbReference type="PhylomeDB" id="Q82TV1"/>
<dbReference type="Proteomes" id="UP000001416">
    <property type="component" value="Chromosome"/>
</dbReference>
<dbReference type="GO" id="GO:0005886">
    <property type="term" value="C:plasma membrane"/>
    <property type="evidence" value="ECO:0007669"/>
    <property type="project" value="UniProtKB-SubCell"/>
</dbReference>
<dbReference type="GO" id="GO:0051539">
    <property type="term" value="F:4 iron, 4 sulfur cluster binding"/>
    <property type="evidence" value="ECO:0007669"/>
    <property type="project" value="UniProtKB-KW"/>
</dbReference>
<dbReference type="GO" id="GO:0005506">
    <property type="term" value="F:iron ion binding"/>
    <property type="evidence" value="ECO:0007669"/>
    <property type="project" value="UniProtKB-UniRule"/>
</dbReference>
<dbReference type="GO" id="GO:0050136">
    <property type="term" value="F:NADH:ubiquinone reductase (non-electrogenic) activity"/>
    <property type="evidence" value="ECO:0007669"/>
    <property type="project" value="UniProtKB-UniRule"/>
</dbReference>
<dbReference type="GO" id="GO:0048038">
    <property type="term" value="F:quinone binding"/>
    <property type="evidence" value="ECO:0007669"/>
    <property type="project" value="UniProtKB-KW"/>
</dbReference>
<dbReference type="GO" id="GO:0009060">
    <property type="term" value="P:aerobic respiration"/>
    <property type="evidence" value="ECO:0007669"/>
    <property type="project" value="TreeGrafter"/>
</dbReference>
<dbReference type="FunFam" id="3.30.70.3270:FF:000003">
    <property type="entry name" value="NADH-quinone oxidoreductase subunit I"/>
    <property type="match status" value="1"/>
</dbReference>
<dbReference type="Gene3D" id="3.30.70.3270">
    <property type="match status" value="1"/>
</dbReference>
<dbReference type="HAMAP" id="MF_01351">
    <property type="entry name" value="NDH1_NuoI"/>
    <property type="match status" value="1"/>
</dbReference>
<dbReference type="InterPro" id="IPR017896">
    <property type="entry name" value="4Fe4S_Fe-S-bd"/>
</dbReference>
<dbReference type="InterPro" id="IPR017900">
    <property type="entry name" value="4Fe4S_Fe_S_CS"/>
</dbReference>
<dbReference type="InterPro" id="IPR010226">
    <property type="entry name" value="NADH_quinone_OxRdtase_chainI"/>
</dbReference>
<dbReference type="NCBIfam" id="TIGR01971">
    <property type="entry name" value="NuoI"/>
    <property type="match status" value="1"/>
</dbReference>
<dbReference type="NCBIfam" id="NF004538">
    <property type="entry name" value="PRK05888.1-4"/>
    <property type="match status" value="1"/>
</dbReference>
<dbReference type="NCBIfam" id="NF004539">
    <property type="entry name" value="PRK05888.1-5"/>
    <property type="match status" value="1"/>
</dbReference>
<dbReference type="PANTHER" id="PTHR10849:SF20">
    <property type="entry name" value="NADH DEHYDROGENASE [UBIQUINONE] IRON-SULFUR PROTEIN 8, MITOCHONDRIAL"/>
    <property type="match status" value="1"/>
</dbReference>
<dbReference type="PANTHER" id="PTHR10849">
    <property type="entry name" value="NADH DEHYDROGENASE UBIQUINONE IRON-SULFUR PROTEIN 8, MITOCHONDRIAL"/>
    <property type="match status" value="1"/>
</dbReference>
<dbReference type="Pfam" id="PF12838">
    <property type="entry name" value="Fer4_7"/>
    <property type="match status" value="1"/>
</dbReference>
<dbReference type="SUPFAM" id="SSF54862">
    <property type="entry name" value="4Fe-4S ferredoxins"/>
    <property type="match status" value="1"/>
</dbReference>
<dbReference type="PROSITE" id="PS00198">
    <property type="entry name" value="4FE4S_FER_1"/>
    <property type="match status" value="2"/>
</dbReference>
<dbReference type="PROSITE" id="PS51379">
    <property type="entry name" value="4FE4S_FER_2"/>
    <property type="match status" value="2"/>
</dbReference>
<comment type="function">
    <text evidence="1">NDH-1 shuttles electrons from NADH, via FMN and iron-sulfur (Fe-S) centers, to quinones in the respiratory chain. The immediate electron acceptor for the enzyme in this species is believed to be ubiquinone. Couples the redox reaction to proton translocation (for every two electrons transferred, four hydrogen ions are translocated across the cytoplasmic membrane), and thus conserves the redox energy in a proton gradient.</text>
</comment>
<comment type="catalytic activity">
    <reaction evidence="1">
        <text>a quinone + NADH + 5 H(+)(in) = a quinol + NAD(+) + 4 H(+)(out)</text>
        <dbReference type="Rhea" id="RHEA:57888"/>
        <dbReference type="ChEBI" id="CHEBI:15378"/>
        <dbReference type="ChEBI" id="CHEBI:24646"/>
        <dbReference type="ChEBI" id="CHEBI:57540"/>
        <dbReference type="ChEBI" id="CHEBI:57945"/>
        <dbReference type="ChEBI" id="CHEBI:132124"/>
    </reaction>
</comment>
<comment type="cofactor">
    <cofactor evidence="1">
        <name>[4Fe-4S] cluster</name>
        <dbReference type="ChEBI" id="CHEBI:49883"/>
    </cofactor>
    <text evidence="1">Binds 2 [4Fe-4S] clusters per subunit.</text>
</comment>
<comment type="subunit">
    <text evidence="1">NDH-1 is composed of 14 different subunits. Subunits NuoA, H, J, K, L, M, N constitute the membrane sector of the complex.</text>
</comment>
<comment type="subcellular location">
    <subcellularLocation>
        <location evidence="1">Cell inner membrane</location>
        <topology evidence="1">Peripheral membrane protein</topology>
    </subcellularLocation>
</comment>
<comment type="similarity">
    <text evidence="1">Belongs to the complex I 23 kDa subunit family.</text>
</comment>
<feature type="chain" id="PRO_0000250921" description="NADH-quinone oxidoreductase subunit I">
    <location>
        <begin position="1"/>
        <end position="162"/>
    </location>
</feature>
<feature type="domain" description="4Fe-4S ferredoxin-type 1" evidence="1">
    <location>
        <begin position="53"/>
        <end position="83"/>
    </location>
</feature>
<feature type="domain" description="4Fe-4S ferredoxin-type 2" evidence="1">
    <location>
        <begin position="93"/>
        <end position="122"/>
    </location>
</feature>
<feature type="binding site" evidence="1">
    <location>
        <position position="63"/>
    </location>
    <ligand>
        <name>[4Fe-4S] cluster</name>
        <dbReference type="ChEBI" id="CHEBI:49883"/>
        <label>1</label>
    </ligand>
</feature>
<feature type="binding site" evidence="1">
    <location>
        <position position="66"/>
    </location>
    <ligand>
        <name>[4Fe-4S] cluster</name>
        <dbReference type="ChEBI" id="CHEBI:49883"/>
        <label>1</label>
    </ligand>
</feature>
<feature type="binding site" evidence="1">
    <location>
        <position position="69"/>
    </location>
    <ligand>
        <name>[4Fe-4S] cluster</name>
        <dbReference type="ChEBI" id="CHEBI:49883"/>
        <label>1</label>
    </ligand>
</feature>
<feature type="binding site" evidence="1">
    <location>
        <position position="73"/>
    </location>
    <ligand>
        <name>[4Fe-4S] cluster</name>
        <dbReference type="ChEBI" id="CHEBI:49883"/>
        <label>2</label>
    </ligand>
</feature>
<feature type="binding site" evidence="1">
    <location>
        <position position="102"/>
    </location>
    <ligand>
        <name>[4Fe-4S] cluster</name>
        <dbReference type="ChEBI" id="CHEBI:49883"/>
        <label>2</label>
    </ligand>
</feature>
<feature type="binding site" evidence="1">
    <location>
        <position position="105"/>
    </location>
    <ligand>
        <name>[4Fe-4S] cluster</name>
        <dbReference type="ChEBI" id="CHEBI:49883"/>
        <label>2</label>
    </ligand>
</feature>
<feature type="binding site" evidence="1">
    <location>
        <position position="108"/>
    </location>
    <ligand>
        <name>[4Fe-4S] cluster</name>
        <dbReference type="ChEBI" id="CHEBI:49883"/>
        <label>2</label>
    </ligand>
</feature>
<feature type="binding site" evidence="1">
    <location>
        <position position="112"/>
    </location>
    <ligand>
        <name>[4Fe-4S] cluster</name>
        <dbReference type="ChEBI" id="CHEBI:49883"/>
        <label>1</label>
    </ligand>
</feature>
<reference key="1">
    <citation type="journal article" date="2003" name="J. Bacteriol.">
        <title>Complete genome sequence of the ammonia-oxidizing bacterium and obligate chemolithoautotroph Nitrosomonas europaea.</title>
        <authorList>
            <person name="Chain P."/>
            <person name="Lamerdin J.E."/>
            <person name="Larimer F.W."/>
            <person name="Regala W."/>
            <person name="Lao V."/>
            <person name="Land M.L."/>
            <person name="Hauser L."/>
            <person name="Hooper A.B."/>
            <person name="Klotz M.G."/>
            <person name="Norton J."/>
            <person name="Sayavedra-Soto L.A."/>
            <person name="Arciero D.M."/>
            <person name="Hommes N.G."/>
            <person name="Whittaker M.M."/>
            <person name="Arp D.J."/>
        </authorList>
    </citation>
    <scope>NUCLEOTIDE SEQUENCE [LARGE SCALE GENOMIC DNA]</scope>
    <source>
        <strain>ATCC 19718 / CIP 103999 / KCTC 2705 / NBRC 14298</strain>
    </source>
</reference>
<organism>
    <name type="scientific">Nitrosomonas europaea (strain ATCC 19718 / CIP 103999 / KCTC 2705 / NBRC 14298)</name>
    <dbReference type="NCBI Taxonomy" id="228410"/>
    <lineage>
        <taxon>Bacteria</taxon>
        <taxon>Pseudomonadati</taxon>
        <taxon>Pseudomonadota</taxon>
        <taxon>Betaproteobacteria</taxon>
        <taxon>Nitrosomonadales</taxon>
        <taxon>Nitrosomonadaceae</taxon>
        <taxon>Nitrosomonas</taxon>
    </lineage>
</organism>
<name>NUOI_NITEU</name>